<protein>
    <recommendedName>
        <fullName>von Willebrand factor A domain-containing protein 7</fullName>
    </recommendedName>
    <alternativeName>
        <fullName>Protein G7c</fullName>
    </alternativeName>
</protein>
<sequence>MLPVEVPLSQLGPPVLLLQLLLPPTSAFFPNIWSLLAAPGSITHQDLTEEAALNVTLELFLEQPPPGRPHLHLEDYRGRTLLADDIFAAYFGSGFSSRRFRAALGEVSRANAAQDFLPASKSNPDLHFDAERLVQGRTRLEGALRETLVAARALEYTLARQRLGAALHALQDFYSHSNWVELGERQPHPHLLWPRRELWSLAQVGDPTCSDCEGLSCPGNMMNLTMLTSGYFGTNPPKPPGKCSHGGRFDQSSSQPPRGGINKDSTSPSFSPHHRLHLQAAEVALLASIEALSLLRSRLGTRGFSRLLDITPASSLSFVLDTTGSMGEEINAAKIQARRIVEQRQGSPMEPVSYILVPFHDPGFGPVFTTSDPDSFWQKLTEIHALGGGDEPEMCLSALELALLHTPPLSDIFVFTDASPKDAFLTNRVESLTRERRCRVTFLVTEDPSRAQGRGRREALSPSRFEPYEAIALASGGEVIFTKDQHIRDVAAVVGESMAGLVTLPLEPPIFTPGEPCVFAVDSLLSKVTVRMHGDISGFWIKSPAGLSQGPEEGIGPLGHTRRFGQFWTVTMTDPPQTGSWEIQVAAEGTPRVRVQAQTSLDFLFHFGISAEDGPHPGLYPLTQPVAGLQTQLLVEVTGLVSRQKLGDGQPQFSHAVLRRVSEGTHLGRVSLEPVGPPERGLLAASLPPTLLSVSVPFSLELVGQDVGGQCLRRSAPQPCSVAPVLLELSGPPDFLTPGSKAPLSLRVASFSGPQDVDLRSSVNPSFSLTSNLSRARLGLNESAWGCLWLEVPDSAAPDTVVTVTVTVTAVGQGASQVPPTHAFLQLLVLAQSSKDQLEDPTHSAAPVLPPTTPALLPSTLVTRGRAGRGTTGKTWWGTVGGVLFLLGCTSW</sequence>
<proteinExistence type="inferred from homology"/>
<name>VWA7_RAT</name>
<organism>
    <name type="scientific">Rattus norvegicus</name>
    <name type="common">Rat</name>
    <dbReference type="NCBI Taxonomy" id="10116"/>
    <lineage>
        <taxon>Eukaryota</taxon>
        <taxon>Metazoa</taxon>
        <taxon>Chordata</taxon>
        <taxon>Craniata</taxon>
        <taxon>Vertebrata</taxon>
        <taxon>Euteleostomi</taxon>
        <taxon>Mammalia</taxon>
        <taxon>Eutheria</taxon>
        <taxon>Euarchontoglires</taxon>
        <taxon>Glires</taxon>
        <taxon>Rodentia</taxon>
        <taxon>Myomorpha</taxon>
        <taxon>Muroidea</taxon>
        <taxon>Muridae</taxon>
        <taxon>Murinae</taxon>
        <taxon>Rattus</taxon>
    </lineage>
</organism>
<evidence type="ECO:0000255" key="1"/>
<evidence type="ECO:0000256" key="2">
    <source>
        <dbReference type="SAM" id="MobiDB-lite"/>
    </source>
</evidence>
<evidence type="ECO:0000305" key="3"/>
<feature type="signal peptide" evidence="1">
    <location>
        <begin position="1"/>
        <end position="27"/>
    </location>
</feature>
<feature type="chain" id="PRO_0000231633" description="von Willebrand factor A domain-containing protein 7">
    <location>
        <begin position="28"/>
        <end position="892"/>
    </location>
</feature>
<feature type="domain" description="VWFA">
    <location>
        <begin position="313"/>
        <end position="495"/>
    </location>
</feature>
<feature type="region of interest" description="Disordered" evidence="2">
    <location>
        <begin position="231"/>
        <end position="272"/>
    </location>
</feature>
<feature type="glycosylation site" description="N-linked (GlcNAc...) asparagine" evidence="1">
    <location>
        <position position="54"/>
    </location>
</feature>
<gene>
    <name type="primary">Vwa7</name>
    <name type="synonym">G7c</name>
</gene>
<comment type="subcellular location">
    <subcellularLocation>
        <location evidence="3">Secreted</location>
    </subcellularLocation>
</comment>
<accession>Q6MG64</accession>
<keyword id="KW-0325">Glycoprotein</keyword>
<keyword id="KW-1185">Reference proteome</keyword>
<keyword id="KW-0964">Secreted</keyword>
<keyword id="KW-0732">Signal</keyword>
<reference key="1">
    <citation type="journal article" date="2004" name="Genome Res.">
        <title>The genomic sequence and comparative analysis of the rat major histocompatibility complex.</title>
        <authorList>
            <person name="Hurt P."/>
            <person name="Walter L."/>
            <person name="Sudbrak R."/>
            <person name="Klages S."/>
            <person name="Mueller I."/>
            <person name="Shiina T."/>
            <person name="Inoko H."/>
            <person name="Lehrach H."/>
            <person name="Guenther E."/>
            <person name="Reinhardt R."/>
            <person name="Himmelbauer H."/>
        </authorList>
    </citation>
    <scope>NUCLEOTIDE SEQUENCE [LARGE SCALE GENOMIC DNA]</scope>
    <source>
        <strain>Brown Norway</strain>
    </source>
</reference>
<dbReference type="EMBL" id="BX883045">
    <property type="protein sequence ID" value="CAE83982.1"/>
    <property type="molecule type" value="Genomic_DNA"/>
</dbReference>
<dbReference type="RefSeq" id="NP_997664.1">
    <property type="nucleotide sequence ID" value="NM_212499.2"/>
</dbReference>
<dbReference type="RefSeq" id="XP_017457127.1">
    <property type="nucleotide sequence ID" value="XM_017601638.1"/>
</dbReference>
<dbReference type="SMR" id="Q6MG64"/>
<dbReference type="FunCoup" id="Q6MG64">
    <property type="interactions" value="76"/>
</dbReference>
<dbReference type="STRING" id="10116.ENSRNOP00000001153"/>
<dbReference type="GlyCosmos" id="Q6MG64">
    <property type="glycosylation" value="1 site, No reported glycans"/>
</dbReference>
<dbReference type="GlyGen" id="Q6MG64">
    <property type="glycosylation" value="1 site"/>
</dbReference>
<dbReference type="PhosphoSitePlus" id="Q6MG64"/>
<dbReference type="PaxDb" id="10116-ENSRNOP00000001153"/>
<dbReference type="Ensembl" id="ENSRNOT00000001153.5">
    <property type="protein sequence ID" value="ENSRNOP00000001153.2"/>
    <property type="gene ID" value="ENSRNOG00000000860.5"/>
</dbReference>
<dbReference type="GeneID" id="309611"/>
<dbReference type="KEGG" id="rno:309611"/>
<dbReference type="UCSC" id="RGD:1303137">
    <property type="organism name" value="rat"/>
</dbReference>
<dbReference type="AGR" id="RGD:1303137"/>
<dbReference type="CTD" id="80737"/>
<dbReference type="RGD" id="1303137">
    <property type="gene designation" value="Vwa7"/>
</dbReference>
<dbReference type="eggNOG" id="KOG4475">
    <property type="taxonomic scope" value="Eukaryota"/>
</dbReference>
<dbReference type="GeneTree" id="ENSGT00390000011517"/>
<dbReference type="HOGENOM" id="CLU_013884_0_0_1"/>
<dbReference type="InParanoid" id="Q6MG64"/>
<dbReference type="OMA" id="MEPIHYV"/>
<dbReference type="PhylomeDB" id="Q6MG64"/>
<dbReference type="TreeFam" id="TF329905"/>
<dbReference type="PRO" id="PR:Q6MG64"/>
<dbReference type="Proteomes" id="UP000002494">
    <property type="component" value="Chromosome 20"/>
</dbReference>
<dbReference type="Bgee" id="ENSRNOG00000000860">
    <property type="expression patterns" value="Expressed in heart and 13 other cell types or tissues"/>
</dbReference>
<dbReference type="GO" id="GO:0005576">
    <property type="term" value="C:extracellular region"/>
    <property type="evidence" value="ECO:0007669"/>
    <property type="project" value="UniProtKB-SubCell"/>
</dbReference>
<dbReference type="Gene3D" id="3.40.50.410">
    <property type="entry name" value="von Willebrand factor, type A domain"/>
    <property type="match status" value="1"/>
</dbReference>
<dbReference type="InterPro" id="IPR056475">
    <property type="entry name" value="GBD_Hemicentin/VWA7"/>
</dbReference>
<dbReference type="InterPro" id="IPR056861">
    <property type="entry name" value="HMCN1-like_VWA"/>
</dbReference>
<dbReference type="InterPro" id="IPR052577">
    <property type="entry name" value="VWA7"/>
</dbReference>
<dbReference type="InterPro" id="IPR056862">
    <property type="entry name" value="VWA7_N"/>
</dbReference>
<dbReference type="InterPro" id="IPR036465">
    <property type="entry name" value="vWFA_dom_sf"/>
</dbReference>
<dbReference type="PANTHER" id="PTHR14905">
    <property type="entry name" value="NG37"/>
    <property type="match status" value="1"/>
</dbReference>
<dbReference type="PANTHER" id="PTHR14905:SF7">
    <property type="entry name" value="VON WILLEBRAND FACTOR A DOMAIN-CONTAINING PROTEIN 7"/>
    <property type="match status" value="1"/>
</dbReference>
<dbReference type="Pfam" id="PF23560">
    <property type="entry name" value="GBD_Hemicentin"/>
    <property type="match status" value="1"/>
</dbReference>
<dbReference type="Pfam" id="PF23619">
    <property type="entry name" value="Ig_VWA7"/>
    <property type="match status" value="1"/>
</dbReference>
<dbReference type="Pfam" id="PF23610">
    <property type="entry name" value="VWA7_4"/>
    <property type="match status" value="1"/>
</dbReference>
<dbReference type="Pfam" id="PF25107">
    <property type="entry name" value="VWA7_N"/>
    <property type="match status" value="1"/>
</dbReference>
<dbReference type="Pfam" id="PF25106">
    <property type="entry name" value="VWA_4"/>
    <property type="match status" value="1"/>
</dbReference>
<dbReference type="SUPFAM" id="SSF53300">
    <property type="entry name" value="vWA-like"/>
    <property type="match status" value="1"/>
</dbReference>